<reference key="1">
    <citation type="journal article" date="1990" name="Virology">
        <title>The complete DNA sequence of vaccinia virus.</title>
        <authorList>
            <person name="Goebel S.J."/>
            <person name="Johnson G.P."/>
            <person name="Perkus M.E."/>
            <person name="Davis S.W."/>
            <person name="Winslow J.P."/>
            <person name="Paoletti E."/>
        </authorList>
    </citation>
    <scope>NUCLEOTIDE SEQUENCE [LARGE SCALE GENOMIC DNA]</scope>
</reference>
<reference key="2">
    <citation type="journal article" date="1990" name="Virology">
        <title>Appendix to 'The complete DNA sequence of vaccinia virus'.</title>
        <authorList>
            <person name="Goebel S.J."/>
            <person name="Johnson G.P."/>
            <person name="Perkus M.E."/>
            <person name="Davis S.W."/>
            <person name="Winslow J.P."/>
            <person name="Paoletti E."/>
        </authorList>
    </citation>
    <scope>NUCLEOTIDE SEQUENCE [LARGE SCALE GENOMIC DNA]</scope>
</reference>
<dbReference type="EMBL" id="M35027">
    <property type="protein sequence ID" value="AAA48205.1"/>
    <property type="molecule type" value="Genomic_DNA"/>
</dbReference>
<dbReference type="PIR" id="G42526">
    <property type="entry name" value="G42526"/>
</dbReference>
<dbReference type="SMR" id="P21004"/>
<dbReference type="Proteomes" id="UP000008269">
    <property type="component" value="Segment"/>
</dbReference>
<dbReference type="GO" id="GO:0005576">
    <property type="term" value="C:extracellular region"/>
    <property type="evidence" value="ECO:0007669"/>
    <property type="project" value="UniProtKB-SubCell"/>
</dbReference>
<dbReference type="GO" id="GO:0004896">
    <property type="term" value="F:cytokine receptor activity"/>
    <property type="evidence" value="ECO:0007669"/>
    <property type="project" value="InterPro"/>
</dbReference>
<dbReference type="GO" id="GO:0052170">
    <property type="term" value="P:symbiont-mediated suppression of host innate immune response"/>
    <property type="evidence" value="ECO:0007669"/>
    <property type="project" value="UniProtKB-KW"/>
</dbReference>
<dbReference type="GO" id="GO:0039502">
    <property type="term" value="P:symbiont-mediated suppression of host type I interferon-mediated signaling pathway"/>
    <property type="evidence" value="ECO:0007669"/>
    <property type="project" value="UniProtKB-KW"/>
</dbReference>
<dbReference type="GO" id="GO:0060333">
    <property type="term" value="P:type II interferon-mediated signaling pathway"/>
    <property type="evidence" value="ECO:0007669"/>
    <property type="project" value="InterPro"/>
</dbReference>
<dbReference type="Gene3D" id="6.10.140.1480">
    <property type="match status" value="1"/>
</dbReference>
<dbReference type="Gene3D" id="2.60.40.10">
    <property type="entry name" value="Immunoglobulins"/>
    <property type="match status" value="2"/>
</dbReference>
<dbReference type="InterPro" id="IPR054752">
    <property type="entry name" value="CR4_N"/>
</dbReference>
<dbReference type="InterPro" id="IPR036116">
    <property type="entry name" value="FN3_sf"/>
</dbReference>
<dbReference type="InterPro" id="IPR021126">
    <property type="entry name" value="IFN_gamma_rc_D2_pox/mammal"/>
</dbReference>
<dbReference type="InterPro" id="IPR013783">
    <property type="entry name" value="Ig-like_fold"/>
</dbReference>
<dbReference type="Pfam" id="PF22325">
    <property type="entry name" value="CR4_N"/>
    <property type="match status" value="1"/>
</dbReference>
<dbReference type="Pfam" id="PF07140">
    <property type="entry name" value="IFNGR1_D2"/>
    <property type="match status" value="1"/>
</dbReference>
<dbReference type="SUPFAM" id="SSF49265">
    <property type="entry name" value="Fibronectin type III"/>
    <property type="match status" value="2"/>
</dbReference>
<proteinExistence type="evidence at transcript level"/>
<keyword id="KW-0244">Early protein</keyword>
<keyword id="KW-0325">Glycoprotein</keyword>
<keyword id="KW-0945">Host-virus interaction</keyword>
<keyword id="KW-1090">Inhibition of host innate immune response by virus</keyword>
<keyword id="KW-1114">Inhibition of host interferon signaling pathway by virus</keyword>
<keyword id="KW-0922">Interferon antiviral system evasion</keyword>
<keyword id="KW-1185">Reference proteome</keyword>
<keyword id="KW-0964">Secreted</keyword>
<keyword id="KW-0732">Signal</keyword>
<keyword id="KW-0899">Viral immunoevasion</keyword>
<protein>
    <recommendedName>
        <fullName>Soluble interferon gamma receptor OPG193</fullName>
        <shortName>B8</shortName>
    </recommendedName>
</protein>
<accession>P21004</accession>
<feature type="signal peptide" evidence="2">
    <location>
        <begin position="1"/>
        <end position="13"/>
    </location>
</feature>
<feature type="chain" id="PRO_0000040608" description="Soluble interferon gamma receptor OPG193">
    <location>
        <begin position="14"/>
        <end position="272"/>
    </location>
</feature>
<feature type="glycosylation site" description="N-linked (GlcNAc...) asparagine; by host" evidence="2">
    <location>
        <position position="42"/>
    </location>
</feature>
<feature type="glycosylation site" description="N-linked (GlcNAc...) asparagine; by host" evidence="2">
    <location>
        <position position="150"/>
    </location>
</feature>
<feature type="glycosylation site" description="N-linked (GlcNAc...) asparagine; by host" evidence="2">
    <location>
        <position position="267"/>
    </location>
</feature>
<name>PG193_VACCC</name>
<gene>
    <name type="primary">OPG193</name>
    <name type="ORF">B8R</name>
</gene>
<sequence>MRYIIILAVLFINSIHAKITSYKFESVNFDSKIEWTGDGLYNISLKNYGIKTWQTMYTNVPEGTYDISAFPKNDFVSFWVKFEQGDYKVEEYCTGLCVEVKIGPPTVTLTEYDDHINLYIEHPYATRGSKKIPIYKRGDMCDIYLLYTANFTFGDSEEPVTYDIDDYDCTSTGCSIDFATTEKVCVTAQGATEGFLEKITPWSSEVCLTPKKNVYTCAIRSKEDVPNFKDKMARVIKRKFNKQSQSYLTKFLGSTSNDVTTFLSMLNLTKYS</sequence>
<evidence type="ECO:0000250" key="1">
    <source>
        <dbReference type="UniProtKB" id="P24770"/>
    </source>
</evidence>
<evidence type="ECO:0000255" key="2"/>
<evidence type="ECO:0000305" key="3"/>
<organismHost>
    <name type="scientific">Homo sapiens</name>
    <name type="common">Human</name>
    <dbReference type="NCBI Taxonomy" id="9606"/>
</organismHost>
<comment type="function">
    <text evidence="1">Counteracts the antiviral effects of host IFN-gamma. Acts as a soluble IFN-gamma receptor and thus inhibits the interaction between host IFN-gamma and its receptor.</text>
</comment>
<comment type="subunit">
    <text evidence="1">Homodimer. Interacts with host IFNG.</text>
</comment>
<comment type="subcellular location">
    <subcellularLocation>
        <location evidence="1">Secreted</location>
    </subcellularLocation>
</comment>
<comment type="induction">
    <text>Expressed in the early phase of the viral replicative cycle.</text>
</comment>
<comment type="similarity">
    <text evidence="3">Belongs to the type II cytokine receptor family.</text>
</comment>
<organism>
    <name type="scientific">Vaccinia virus (strain Copenhagen)</name>
    <name type="common">VACV</name>
    <dbReference type="NCBI Taxonomy" id="10249"/>
    <lineage>
        <taxon>Viruses</taxon>
        <taxon>Varidnaviria</taxon>
        <taxon>Bamfordvirae</taxon>
        <taxon>Nucleocytoviricota</taxon>
        <taxon>Pokkesviricetes</taxon>
        <taxon>Chitovirales</taxon>
        <taxon>Poxviridae</taxon>
        <taxon>Chordopoxvirinae</taxon>
        <taxon>Orthopoxvirus</taxon>
        <taxon>Vaccinia virus</taxon>
    </lineage>
</organism>